<proteinExistence type="inferred from homology"/>
<name>DEOB_SHEDO</name>
<organism>
    <name type="scientific">Shewanella denitrificans (strain OS217 / ATCC BAA-1090 / DSM 15013)</name>
    <dbReference type="NCBI Taxonomy" id="318161"/>
    <lineage>
        <taxon>Bacteria</taxon>
        <taxon>Pseudomonadati</taxon>
        <taxon>Pseudomonadota</taxon>
        <taxon>Gammaproteobacteria</taxon>
        <taxon>Alteromonadales</taxon>
        <taxon>Shewanellaceae</taxon>
        <taxon>Shewanella</taxon>
    </lineage>
</organism>
<keyword id="KW-0963">Cytoplasm</keyword>
<keyword id="KW-0413">Isomerase</keyword>
<keyword id="KW-0464">Manganese</keyword>
<keyword id="KW-0479">Metal-binding</keyword>
<keyword id="KW-1185">Reference proteome</keyword>
<feature type="chain" id="PRO_1000046396" description="Phosphopentomutase">
    <location>
        <begin position="1"/>
        <end position="405"/>
    </location>
</feature>
<feature type="binding site" evidence="1">
    <location>
        <position position="10"/>
    </location>
    <ligand>
        <name>Mn(2+)</name>
        <dbReference type="ChEBI" id="CHEBI:29035"/>
        <label>1</label>
    </ligand>
</feature>
<feature type="binding site" evidence="1">
    <location>
        <position position="303"/>
    </location>
    <ligand>
        <name>Mn(2+)</name>
        <dbReference type="ChEBI" id="CHEBI:29035"/>
        <label>2</label>
    </ligand>
</feature>
<feature type="binding site" evidence="1">
    <location>
        <position position="308"/>
    </location>
    <ligand>
        <name>Mn(2+)</name>
        <dbReference type="ChEBI" id="CHEBI:29035"/>
        <label>2</label>
    </ligand>
</feature>
<feature type="binding site" evidence="1">
    <location>
        <position position="344"/>
    </location>
    <ligand>
        <name>Mn(2+)</name>
        <dbReference type="ChEBI" id="CHEBI:29035"/>
        <label>1</label>
    </ligand>
</feature>
<feature type="binding site" evidence="1">
    <location>
        <position position="345"/>
    </location>
    <ligand>
        <name>Mn(2+)</name>
        <dbReference type="ChEBI" id="CHEBI:29035"/>
        <label>1</label>
    </ligand>
</feature>
<feature type="binding site" evidence="1">
    <location>
        <position position="356"/>
    </location>
    <ligand>
        <name>Mn(2+)</name>
        <dbReference type="ChEBI" id="CHEBI:29035"/>
        <label>2</label>
    </ligand>
</feature>
<sequence length="405" mass="43751">MKRTFILMLDSFGIGAASDADKFGDIGADTFGNIAKACAEGKANIGRDGSLKLPNLAKLGLGHAGFESTGQFAPGFSQDVEVVGAYGYADELSTGKDTPSGHWEMAGVPVLYDWGYFNDLQDSFPKELTDKILARAGLSGFLGNCHASGTTILEQLGEEHMRSGMPIFYTSADSVFQVACHEESFGLDNLLRLCEIAREELGPYNIGRVIARPFIGTGPSDFSRTGNRRDYAVEPPSKTVLDKLKDAGGEVVSVGKIADIYAHCGITKKVKASGLEALFDATLEQIKQAGDRTIVFTNFVDFDSHYGHRRDVAGYAKALEYFDERLPELLALLEQDDLLLLTADHGCDPTWPGSDHTRERVPVLALGAGLAAGSLGLRNSFADMGQSIASYFELEPMEYGESFIQ</sequence>
<comment type="function">
    <text evidence="1">Isomerase that catalyzes the conversion of deoxy-ribose 1-phosphate (dRib-1-P) and ribose 1-phosphate (Rib-1-P) to deoxy-ribose 5-phosphate (dRib-5-P) and ribose 5-phosphate (Rib-5-P), respectively.</text>
</comment>
<comment type="catalytic activity">
    <reaction evidence="1">
        <text>2-deoxy-alpha-D-ribose 1-phosphate = 2-deoxy-D-ribose 5-phosphate</text>
        <dbReference type="Rhea" id="RHEA:27658"/>
        <dbReference type="ChEBI" id="CHEBI:57259"/>
        <dbReference type="ChEBI" id="CHEBI:62877"/>
        <dbReference type="EC" id="5.4.2.7"/>
    </reaction>
</comment>
<comment type="catalytic activity">
    <reaction evidence="1">
        <text>alpha-D-ribose 1-phosphate = D-ribose 5-phosphate</text>
        <dbReference type="Rhea" id="RHEA:18793"/>
        <dbReference type="ChEBI" id="CHEBI:57720"/>
        <dbReference type="ChEBI" id="CHEBI:78346"/>
        <dbReference type="EC" id="5.4.2.7"/>
    </reaction>
</comment>
<comment type="cofactor">
    <cofactor evidence="1">
        <name>Mn(2+)</name>
        <dbReference type="ChEBI" id="CHEBI:29035"/>
    </cofactor>
    <text evidence="1">Binds 2 manganese ions.</text>
</comment>
<comment type="pathway">
    <text evidence="1">Carbohydrate degradation; 2-deoxy-D-ribose 1-phosphate degradation; D-glyceraldehyde 3-phosphate and acetaldehyde from 2-deoxy-alpha-D-ribose 1-phosphate: step 1/2.</text>
</comment>
<comment type="subcellular location">
    <subcellularLocation>
        <location evidence="1">Cytoplasm</location>
    </subcellularLocation>
</comment>
<comment type="similarity">
    <text evidence="1">Belongs to the phosphopentomutase family.</text>
</comment>
<protein>
    <recommendedName>
        <fullName evidence="1">Phosphopentomutase</fullName>
        <ecNumber evidence="1">5.4.2.7</ecNumber>
    </recommendedName>
    <alternativeName>
        <fullName evidence="1">Phosphodeoxyribomutase</fullName>
    </alternativeName>
</protein>
<evidence type="ECO:0000255" key="1">
    <source>
        <dbReference type="HAMAP-Rule" id="MF_00740"/>
    </source>
</evidence>
<dbReference type="EC" id="5.4.2.7" evidence="1"/>
<dbReference type="EMBL" id="CP000302">
    <property type="protein sequence ID" value="ABE54315.1"/>
    <property type="molecule type" value="Genomic_DNA"/>
</dbReference>
<dbReference type="RefSeq" id="WP_011495479.1">
    <property type="nucleotide sequence ID" value="NC_007954.1"/>
</dbReference>
<dbReference type="SMR" id="Q12QG1"/>
<dbReference type="STRING" id="318161.Sden_1027"/>
<dbReference type="KEGG" id="sdn:Sden_1027"/>
<dbReference type="eggNOG" id="COG1015">
    <property type="taxonomic scope" value="Bacteria"/>
</dbReference>
<dbReference type="HOGENOM" id="CLU_053861_0_0_6"/>
<dbReference type="OrthoDB" id="9769930at2"/>
<dbReference type="UniPathway" id="UPA00002">
    <property type="reaction ID" value="UER00467"/>
</dbReference>
<dbReference type="Proteomes" id="UP000001982">
    <property type="component" value="Chromosome"/>
</dbReference>
<dbReference type="GO" id="GO:0005829">
    <property type="term" value="C:cytosol"/>
    <property type="evidence" value="ECO:0007669"/>
    <property type="project" value="TreeGrafter"/>
</dbReference>
<dbReference type="GO" id="GO:0000287">
    <property type="term" value="F:magnesium ion binding"/>
    <property type="evidence" value="ECO:0007669"/>
    <property type="project" value="InterPro"/>
</dbReference>
<dbReference type="GO" id="GO:0030145">
    <property type="term" value="F:manganese ion binding"/>
    <property type="evidence" value="ECO:0007669"/>
    <property type="project" value="UniProtKB-UniRule"/>
</dbReference>
<dbReference type="GO" id="GO:0008973">
    <property type="term" value="F:phosphopentomutase activity"/>
    <property type="evidence" value="ECO:0007669"/>
    <property type="project" value="UniProtKB-UniRule"/>
</dbReference>
<dbReference type="GO" id="GO:0006018">
    <property type="term" value="P:2-deoxyribose 1-phosphate catabolic process"/>
    <property type="evidence" value="ECO:0007669"/>
    <property type="project" value="UniProtKB-UniRule"/>
</dbReference>
<dbReference type="GO" id="GO:0006015">
    <property type="term" value="P:5-phosphoribose 1-diphosphate biosynthetic process"/>
    <property type="evidence" value="ECO:0007669"/>
    <property type="project" value="UniProtKB-UniPathway"/>
</dbReference>
<dbReference type="GO" id="GO:0043094">
    <property type="term" value="P:metabolic compound salvage"/>
    <property type="evidence" value="ECO:0007669"/>
    <property type="project" value="InterPro"/>
</dbReference>
<dbReference type="GO" id="GO:0009117">
    <property type="term" value="P:nucleotide metabolic process"/>
    <property type="evidence" value="ECO:0007669"/>
    <property type="project" value="InterPro"/>
</dbReference>
<dbReference type="CDD" id="cd16009">
    <property type="entry name" value="PPM"/>
    <property type="match status" value="1"/>
</dbReference>
<dbReference type="FunFam" id="3.30.70.1250:FF:000001">
    <property type="entry name" value="Phosphopentomutase"/>
    <property type="match status" value="1"/>
</dbReference>
<dbReference type="Gene3D" id="3.40.720.10">
    <property type="entry name" value="Alkaline Phosphatase, subunit A"/>
    <property type="match status" value="1"/>
</dbReference>
<dbReference type="Gene3D" id="3.30.70.1250">
    <property type="entry name" value="Phosphopentomutase"/>
    <property type="match status" value="1"/>
</dbReference>
<dbReference type="HAMAP" id="MF_00740">
    <property type="entry name" value="Phosphopentomut"/>
    <property type="match status" value="1"/>
</dbReference>
<dbReference type="InterPro" id="IPR017850">
    <property type="entry name" value="Alkaline_phosphatase_core_sf"/>
</dbReference>
<dbReference type="InterPro" id="IPR010045">
    <property type="entry name" value="DeoB"/>
</dbReference>
<dbReference type="InterPro" id="IPR006124">
    <property type="entry name" value="Metalloenzyme"/>
</dbReference>
<dbReference type="InterPro" id="IPR024052">
    <property type="entry name" value="Phosphopentomutase_DeoB_cap_sf"/>
</dbReference>
<dbReference type="NCBIfam" id="TIGR01696">
    <property type="entry name" value="deoB"/>
    <property type="match status" value="1"/>
</dbReference>
<dbReference type="NCBIfam" id="NF003766">
    <property type="entry name" value="PRK05362.1"/>
    <property type="match status" value="1"/>
</dbReference>
<dbReference type="PANTHER" id="PTHR21110">
    <property type="entry name" value="PHOSPHOPENTOMUTASE"/>
    <property type="match status" value="1"/>
</dbReference>
<dbReference type="PANTHER" id="PTHR21110:SF0">
    <property type="entry name" value="PHOSPHOPENTOMUTASE"/>
    <property type="match status" value="1"/>
</dbReference>
<dbReference type="Pfam" id="PF01676">
    <property type="entry name" value="Metalloenzyme"/>
    <property type="match status" value="1"/>
</dbReference>
<dbReference type="PIRSF" id="PIRSF001491">
    <property type="entry name" value="Ppentomutase"/>
    <property type="match status" value="1"/>
</dbReference>
<dbReference type="SUPFAM" id="SSF53649">
    <property type="entry name" value="Alkaline phosphatase-like"/>
    <property type="match status" value="1"/>
</dbReference>
<dbReference type="SUPFAM" id="SSF143856">
    <property type="entry name" value="DeoB insert domain-like"/>
    <property type="match status" value="1"/>
</dbReference>
<accession>Q12QG1</accession>
<gene>
    <name evidence="1" type="primary">deoB</name>
    <name type="ordered locus">Sden_1027</name>
</gene>
<reference key="1">
    <citation type="submission" date="2006-03" db="EMBL/GenBank/DDBJ databases">
        <title>Complete sequence of Shewanella denitrificans OS217.</title>
        <authorList>
            <consortium name="US DOE Joint Genome Institute"/>
            <person name="Copeland A."/>
            <person name="Lucas S."/>
            <person name="Lapidus A."/>
            <person name="Barry K."/>
            <person name="Detter J.C."/>
            <person name="Glavina del Rio T."/>
            <person name="Hammon N."/>
            <person name="Israni S."/>
            <person name="Dalin E."/>
            <person name="Tice H."/>
            <person name="Pitluck S."/>
            <person name="Brettin T."/>
            <person name="Bruce D."/>
            <person name="Han C."/>
            <person name="Tapia R."/>
            <person name="Gilna P."/>
            <person name="Kiss H."/>
            <person name="Schmutz J."/>
            <person name="Larimer F."/>
            <person name="Land M."/>
            <person name="Hauser L."/>
            <person name="Kyrpides N."/>
            <person name="Lykidis A."/>
            <person name="Richardson P."/>
        </authorList>
    </citation>
    <scope>NUCLEOTIDE SEQUENCE [LARGE SCALE GENOMIC DNA]</scope>
    <source>
        <strain>OS217 / ATCC BAA-1090 / DSM 15013</strain>
    </source>
</reference>